<feature type="chain" id="PRO_1000087471" description="tRNA N6-adenosine threonylcarbamoyltransferase">
    <location>
        <begin position="1"/>
        <end position="341"/>
    </location>
</feature>
<feature type="binding site" evidence="1">
    <location>
        <position position="115"/>
    </location>
    <ligand>
        <name>Fe cation</name>
        <dbReference type="ChEBI" id="CHEBI:24875"/>
    </ligand>
</feature>
<feature type="binding site" evidence="1">
    <location>
        <position position="119"/>
    </location>
    <ligand>
        <name>Fe cation</name>
        <dbReference type="ChEBI" id="CHEBI:24875"/>
    </ligand>
</feature>
<feature type="binding site" evidence="1">
    <location>
        <begin position="138"/>
        <end position="142"/>
    </location>
    <ligand>
        <name>substrate</name>
    </ligand>
</feature>
<feature type="binding site" evidence="1">
    <location>
        <position position="171"/>
    </location>
    <ligand>
        <name>substrate</name>
    </ligand>
</feature>
<feature type="binding site" evidence="1">
    <location>
        <position position="184"/>
    </location>
    <ligand>
        <name>substrate</name>
    </ligand>
</feature>
<feature type="binding site" evidence="1">
    <location>
        <position position="188"/>
    </location>
    <ligand>
        <name>substrate</name>
    </ligand>
</feature>
<feature type="binding site" evidence="1">
    <location>
        <position position="279"/>
    </location>
    <ligand>
        <name>substrate</name>
    </ligand>
</feature>
<feature type="binding site" evidence="1">
    <location>
        <position position="307"/>
    </location>
    <ligand>
        <name>Fe cation</name>
        <dbReference type="ChEBI" id="CHEBI:24875"/>
    </ligand>
</feature>
<protein>
    <recommendedName>
        <fullName evidence="1">tRNA N6-adenosine threonylcarbamoyltransferase</fullName>
        <ecNumber evidence="1">2.3.1.234</ecNumber>
    </recommendedName>
    <alternativeName>
        <fullName evidence="1">N6-L-threonylcarbamoyladenine synthase</fullName>
        <shortName evidence="1">t(6)A synthase</shortName>
    </alternativeName>
    <alternativeName>
        <fullName evidence="1">t(6)A37 threonylcarbamoyladenosine biosynthesis protein TsaD</fullName>
    </alternativeName>
    <alternativeName>
        <fullName evidence="1">tRNA threonylcarbamoyladenosine biosynthesis protein TsaD</fullName>
    </alternativeName>
</protein>
<proteinExistence type="inferred from homology"/>
<accession>A5N5B9</accession>
<evidence type="ECO:0000255" key="1">
    <source>
        <dbReference type="HAMAP-Rule" id="MF_01445"/>
    </source>
</evidence>
<sequence length="341" mass="36919">MDKDLRILAIESSCDETSAAVVVNGRIVLSNIISSQIDIHKKFGGVVPEVASRKHIEVISVVVEQALEEAQITFKDIDAIGVTYGPGLVGALLVGLQYAKALSYALNKPLIGVNHIEGHISANFIQYKDLKPPFVCLVVSGGHTYLVYMKDYGKFEVLGQTRDDAAGEAYDKIARAIGLGYPGGPKVDKIAREGNPDAIKFPRANFHDNKTLDFSFSGLKSSVLNYLNQKSMKKEDINKADVAASFQKAVVSFLVDNSLRACKLKNVNKIAVAGGVASNTCLRETFKSQGSKNKVDVLFPEPILCTDNAAMIGSAAYFEYMRGNTSSLNLNAIPNLKLGER</sequence>
<reference key="1">
    <citation type="journal article" date="2008" name="Proc. Natl. Acad. Sci. U.S.A.">
        <title>The genome of Clostridium kluyveri, a strict anaerobe with unique metabolic features.</title>
        <authorList>
            <person name="Seedorf H."/>
            <person name="Fricke W.F."/>
            <person name="Veith B."/>
            <person name="Brueggemann H."/>
            <person name="Liesegang H."/>
            <person name="Strittmatter A."/>
            <person name="Miethke M."/>
            <person name="Buckel W."/>
            <person name="Hinderberger J."/>
            <person name="Li F."/>
            <person name="Hagemeier C."/>
            <person name="Thauer R.K."/>
            <person name="Gottschalk G."/>
        </authorList>
    </citation>
    <scope>NUCLEOTIDE SEQUENCE [LARGE SCALE GENOMIC DNA]</scope>
    <source>
        <strain>ATCC 8527 / DSM 555 / NBRC 12016 / NCIMB 10680 / K1</strain>
    </source>
</reference>
<gene>
    <name evidence="1" type="primary">tsaD</name>
    <name type="synonym">gcp</name>
    <name type="ordered locus">CKL_0446</name>
</gene>
<comment type="function">
    <text evidence="1">Required for the formation of a threonylcarbamoyl group on adenosine at position 37 (t(6)A37) in tRNAs that read codons beginning with adenine. Is involved in the transfer of the threonylcarbamoyl moiety of threonylcarbamoyl-AMP (TC-AMP) to the N6 group of A37, together with TsaE and TsaB. TsaD likely plays a direct catalytic role in this reaction.</text>
</comment>
<comment type="catalytic activity">
    <reaction evidence="1">
        <text>L-threonylcarbamoyladenylate + adenosine(37) in tRNA = N(6)-L-threonylcarbamoyladenosine(37) in tRNA + AMP + H(+)</text>
        <dbReference type="Rhea" id="RHEA:37059"/>
        <dbReference type="Rhea" id="RHEA-COMP:10162"/>
        <dbReference type="Rhea" id="RHEA-COMP:10163"/>
        <dbReference type="ChEBI" id="CHEBI:15378"/>
        <dbReference type="ChEBI" id="CHEBI:73682"/>
        <dbReference type="ChEBI" id="CHEBI:74411"/>
        <dbReference type="ChEBI" id="CHEBI:74418"/>
        <dbReference type="ChEBI" id="CHEBI:456215"/>
        <dbReference type="EC" id="2.3.1.234"/>
    </reaction>
</comment>
<comment type="cofactor">
    <cofactor evidence="1">
        <name>Fe(2+)</name>
        <dbReference type="ChEBI" id="CHEBI:29033"/>
    </cofactor>
    <text evidence="1">Binds 1 Fe(2+) ion per subunit.</text>
</comment>
<comment type="subcellular location">
    <subcellularLocation>
        <location evidence="1">Cytoplasm</location>
    </subcellularLocation>
</comment>
<comment type="similarity">
    <text evidence="1">Belongs to the KAE1 / TsaD family.</text>
</comment>
<name>TSAD_CLOK5</name>
<keyword id="KW-0012">Acyltransferase</keyword>
<keyword id="KW-0963">Cytoplasm</keyword>
<keyword id="KW-0408">Iron</keyword>
<keyword id="KW-0479">Metal-binding</keyword>
<keyword id="KW-1185">Reference proteome</keyword>
<keyword id="KW-0808">Transferase</keyword>
<keyword id="KW-0819">tRNA processing</keyword>
<dbReference type="EC" id="2.3.1.234" evidence="1"/>
<dbReference type="EMBL" id="CP000673">
    <property type="protein sequence ID" value="EDK32500.1"/>
    <property type="molecule type" value="Genomic_DNA"/>
</dbReference>
<dbReference type="RefSeq" id="WP_011989015.1">
    <property type="nucleotide sequence ID" value="NC_009706.1"/>
</dbReference>
<dbReference type="SMR" id="A5N5B9"/>
<dbReference type="STRING" id="431943.CKL_0446"/>
<dbReference type="KEGG" id="ckl:CKL_0446"/>
<dbReference type="eggNOG" id="COG0533">
    <property type="taxonomic scope" value="Bacteria"/>
</dbReference>
<dbReference type="HOGENOM" id="CLU_023208_0_2_9"/>
<dbReference type="Proteomes" id="UP000002411">
    <property type="component" value="Chromosome"/>
</dbReference>
<dbReference type="GO" id="GO:0005737">
    <property type="term" value="C:cytoplasm"/>
    <property type="evidence" value="ECO:0007669"/>
    <property type="project" value="UniProtKB-SubCell"/>
</dbReference>
<dbReference type="GO" id="GO:0005506">
    <property type="term" value="F:iron ion binding"/>
    <property type="evidence" value="ECO:0007669"/>
    <property type="project" value="UniProtKB-UniRule"/>
</dbReference>
<dbReference type="GO" id="GO:0061711">
    <property type="term" value="F:N(6)-L-threonylcarbamoyladenine synthase activity"/>
    <property type="evidence" value="ECO:0007669"/>
    <property type="project" value="UniProtKB-EC"/>
</dbReference>
<dbReference type="GO" id="GO:0002949">
    <property type="term" value="P:tRNA threonylcarbamoyladenosine modification"/>
    <property type="evidence" value="ECO:0007669"/>
    <property type="project" value="UniProtKB-UniRule"/>
</dbReference>
<dbReference type="CDD" id="cd24133">
    <property type="entry name" value="ASKHA_NBD_TsaD_bac"/>
    <property type="match status" value="1"/>
</dbReference>
<dbReference type="FunFam" id="3.30.420.40:FF:000012">
    <property type="entry name" value="tRNA N6-adenosine threonylcarbamoyltransferase"/>
    <property type="match status" value="1"/>
</dbReference>
<dbReference type="FunFam" id="3.30.420.40:FF:000040">
    <property type="entry name" value="tRNA N6-adenosine threonylcarbamoyltransferase"/>
    <property type="match status" value="1"/>
</dbReference>
<dbReference type="Gene3D" id="3.30.420.40">
    <property type="match status" value="2"/>
</dbReference>
<dbReference type="HAMAP" id="MF_01445">
    <property type="entry name" value="TsaD"/>
    <property type="match status" value="1"/>
</dbReference>
<dbReference type="InterPro" id="IPR043129">
    <property type="entry name" value="ATPase_NBD"/>
</dbReference>
<dbReference type="InterPro" id="IPR000905">
    <property type="entry name" value="Gcp-like_dom"/>
</dbReference>
<dbReference type="InterPro" id="IPR017861">
    <property type="entry name" value="KAE1/TsaD"/>
</dbReference>
<dbReference type="InterPro" id="IPR017860">
    <property type="entry name" value="Peptidase_M22_CS"/>
</dbReference>
<dbReference type="InterPro" id="IPR022450">
    <property type="entry name" value="TsaD"/>
</dbReference>
<dbReference type="NCBIfam" id="TIGR00329">
    <property type="entry name" value="gcp_kae1"/>
    <property type="match status" value="1"/>
</dbReference>
<dbReference type="NCBIfam" id="TIGR03723">
    <property type="entry name" value="T6A_TsaD_YgjD"/>
    <property type="match status" value="1"/>
</dbReference>
<dbReference type="PANTHER" id="PTHR11735">
    <property type="entry name" value="TRNA N6-ADENOSINE THREONYLCARBAMOYLTRANSFERASE"/>
    <property type="match status" value="1"/>
</dbReference>
<dbReference type="PANTHER" id="PTHR11735:SF6">
    <property type="entry name" value="TRNA N6-ADENOSINE THREONYLCARBAMOYLTRANSFERASE, MITOCHONDRIAL"/>
    <property type="match status" value="1"/>
</dbReference>
<dbReference type="Pfam" id="PF00814">
    <property type="entry name" value="TsaD"/>
    <property type="match status" value="1"/>
</dbReference>
<dbReference type="PRINTS" id="PR00789">
    <property type="entry name" value="OSIALOPTASE"/>
</dbReference>
<dbReference type="SUPFAM" id="SSF53067">
    <property type="entry name" value="Actin-like ATPase domain"/>
    <property type="match status" value="2"/>
</dbReference>
<dbReference type="PROSITE" id="PS01016">
    <property type="entry name" value="GLYCOPROTEASE"/>
    <property type="match status" value="1"/>
</dbReference>
<organism>
    <name type="scientific">Clostridium kluyveri (strain ATCC 8527 / DSM 555 / NBRC 12016 / NCIMB 10680 / K1)</name>
    <dbReference type="NCBI Taxonomy" id="431943"/>
    <lineage>
        <taxon>Bacteria</taxon>
        <taxon>Bacillati</taxon>
        <taxon>Bacillota</taxon>
        <taxon>Clostridia</taxon>
        <taxon>Eubacteriales</taxon>
        <taxon>Clostridiaceae</taxon>
        <taxon>Clostridium</taxon>
    </lineage>
</organism>